<comment type="function">
    <text evidence="1">Repressor of the glycerol-3-phosphate regulon.</text>
</comment>
<protein>
    <recommendedName>
        <fullName>Glycerol-3-phosphate regulon repressor</fullName>
    </recommendedName>
</protein>
<name>GLPR_HAEIN</name>
<evidence type="ECO:0000250" key="1"/>
<evidence type="ECO:0000255" key="2">
    <source>
        <dbReference type="PROSITE-ProRule" id="PRU00349"/>
    </source>
</evidence>
<sequence>MKQSLRHQKIIKLVEQSGYLSTEELVAALDVSPQTIRRDLNILAELDLIRRHHGGAASPSSAENSDYVDRKQFFSLQKNNIAQEVAKLIPNGASLFIDIGTTPEAVANALLGHEKLRIVTNNLNAAHLLRQNESFDIVMAGGSLRMDGGIIGEATVNFISQFRLDFGILGISAIDADGSLLDYDYHEVQVKRAIIESSRQTLLVADHSKFTRQAIVRLGELSDVEYLFTGDVPEGIVNYLKEQKTKLVLCNGKVR</sequence>
<organism>
    <name type="scientific">Haemophilus influenzae (strain ATCC 51907 / DSM 11121 / KW20 / Rd)</name>
    <dbReference type="NCBI Taxonomy" id="71421"/>
    <lineage>
        <taxon>Bacteria</taxon>
        <taxon>Pseudomonadati</taxon>
        <taxon>Pseudomonadota</taxon>
        <taxon>Gammaproteobacteria</taxon>
        <taxon>Pasteurellales</taxon>
        <taxon>Pasteurellaceae</taxon>
        <taxon>Haemophilus</taxon>
    </lineage>
</organism>
<keyword id="KW-0238">DNA-binding</keyword>
<keyword id="KW-0319">Glycerol metabolism</keyword>
<keyword id="KW-1185">Reference proteome</keyword>
<keyword id="KW-0678">Repressor</keyword>
<keyword id="KW-0804">Transcription</keyword>
<keyword id="KW-0805">Transcription regulation</keyword>
<feature type="chain" id="PRO_0000050253" description="Glycerol-3-phosphate regulon repressor">
    <location>
        <begin position="1"/>
        <end position="255"/>
    </location>
</feature>
<feature type="domain" description="HTH deoR-type" evidence="2">
    <location>
        <begin position="3"/>
        <end position="58"/>
    </location>
</feature>
<feature type="DNA-binding region" description="H-T-H motif" evidence="2">
    <location>
        <begin position="20"/>
        <end position="39"/>
    </location>
</feature>
<reference key="1">
    <citation type="journal article" date="1995" name="Science">
        <title>Whole-genome random sequencing and assembly of Haemophilus influenzae Rd.</title>
        <authorList>
            <person name="Fleischmann R.D."/>
            <person name="Adams M.D."/>
            <person name="White O."/>
            <person name="Clayton R.A."/>
            <person name="Kirkness E.F."/>
            <person name="Kerlavage A.R."/>
            <person name="Bult C.J."/>
            <person name="Tomb J.-F."/>
            <person name="Dougherty B.A."/>
            <person name="Merrick J.M."/>
            <person name="McKenney K."/>
            <person name="Sutton G.G."/>
            <person name="FitzHugh W."/>
            <person name="Fields C.A."/>
            <person name="Gocayne J.D."/>
            <person name="Scott J.D."/>
            <person name="Shirley R."/>
            <person name="Liu L.-I."/>
            <person name="Glodek A."/>
            <person name="Kelley J.M."/>
            <person name="Weidman J.F."/>
            <person name="Phillips C.A."/>
            <person name="Spriggs T."/>
            <person name="Hedblom E."/>
            <person name="Cotton M.D."/>
            <person name="Utterback T.R."/>
            <person name="Hanna M.C."/>
            <person name="Nguyen D.T."/>
            <person name="Saudek D.M."/>
            <person name="Brandon R.C."/>
            <person name="Fine L.D."/>
            <person name="Fritchman J.L."/>
            <person name="Fuhrmann J.L."/>
            <person name="Geoghagen N.S.M."/>
            <person name="Gnehm C.L."/>
            <person name="McDonald L.A."/>
            <person name="Small K.V."/>
            <person name="Fraser C.M."/>
            <person name="Smith H.O."/>
            <person name="Venter J.C."/>
        </authorList>
    </citation>
    <scope>NUCLEOTIDE SEQUENCE [LARGE SCALE GENOMIC DNA]</scope>
    <source>
        <strain>ATCC 51907 / DSM 11121 / KW20 / Rd</strain>
    </source>
</reference>
<proteinExistence type="inferred from homology"/>
<gene>
    <name type="primary">glpR</name>
    <name type="ordered locus">HI_0619</name>
</gene>
<accession>P44784</accession>
<dbReference type="EMBL" id="L42023">
    <property type="protein sequence ID" value="AAC22278.1"/>
    <property type="molecule type" value="Genomic_DNA"/>
</dbReference>
<dbReference type="PIR" id="A64082">
    <property type="entry name" value="A64082"/>
</dbReference>
<dbReference type="RefSeq" id="NP_438777.1">
    <property type="nucleotide sequence ID" value="NC_000907.1"/>
</dbReference>
<dbReference type="SMR" id="P44784"/>
<dbReference type="STRING" id="71421.HI_0619"/>
<dbReference type="EnsemblBacteria" id="AAC22278">
    <property type="protein sequence ID" value="AAC22278"/>
    <property type="gene ID" value="HI_0619"/>
</dbReference>
<dbReference type="KEGG" id="hin:HI_0619"/>
<dbReference type="PATRIC" id="fig|71421.8.peg.643"/>
<dbReference type="eggNOG" id="COG1349">
    <property type="taxonomic scope" value="Bacteria"/>
</dbReference>
<dbReference type="HOGENOM" id="CLU_060699_0_0_6"/>
<dbReference type="OrthoDB" id="9814815at2"/>
<dbReference type="PhylomeDB" id="P44784"/>
<dbReference type="BioCyc" id="HINF71421:G1GJ1-640-MONOMER"/>
<dbReference type="Proteomes" id="UP000000579">
    <property type="component" value="Chromosome"/>
</dbReference>
<dbReference type="GO" id="GO:0000987">
    <property type="term" value="F:cis-regulatory region sequence-specific DNA binding"/>
    <property type="evidence" value="ECO:0000318"/>
    <property type="project" value="GO_Central"/>
</dbReference>
<dbReference type="GO" id="GO:0098531">
    <property type="term" value="F:ligand-modulated transcription factor activity"/>
    <property type="evidence" value="ECO:0000318"/>
    <property type="project" value="GO_Central"/>
</dbReference>
<dbReference type="GO" id="GO:0006071">
    <property type="term" value="P:glycerol metabolic process"/>
    <property type="evidence" value="ECO:0007669"/>
    <property type="project" value="UniProtKB-KW"/>
</dbReference>
<dbReference type="GO" id="GO:0006355">
    <property type="term" value="P:regulation of DNA-templated transcription"/>
    <property type="evidence" value="ECO:0000318"/>
    <property type="project" value="GO_Central"/>
</dbReference>
<dbReference type="Gene3D" id="3.30.750.70">
    <property type="entry name" value="4-hydroxybutyrate coenzyme like domains"/>
    <property type="match status" value="1"/>
</dbReference>
<dbReference type="Gene3D" id="1.10.10.10">
    <property type="entry name" value="Winged helix-like DNA-binding domain superfamily/Winged helix DNA-binding domain"/>
    <property type="match status" value="1"/>
</dbReference>
<dbReference type="InterPro" id="IPR050313">
    <property type="entry name" value="Carb_Metab_HTH_regulators"/>
</dbReference>
<dbReference type="InterPro" id="IPR014036">
    <property type="entry name" value="DeoR-like_C"/>
</dbReference>
<dbReference type="InterPro" id="IPR001034">
    <property type="entry name" value="DeoR_HTH"/>
</dbReference>
<dbReference type="InterPro" id="IPR037171">
    <property type="entry name" value="NagB/RpiA_transferase-like"/>
</dbReference>
<dbReference type="InterPro" id="IPR018356">
    <property type="entry name" value="Tscrpt_reg_HTH_DeoR_CS"/>
</dbReference>
<dbReference type="InterPro" id="IPR036388">
    <property type="entry name" value="WH-like_DNA-bd_sf"/>
</dbReference>
<dbReference type="InterPro" id="IPR036390">
    <property type="entry name" value="WH_DNA-bd_sf"/>
</dbReference>
<dbReference type="NCBIfam" id="NF008154">
    <property type="entry name" value="PRK10906.1"/>
    <property type="match status" value="1"/>
</dbReference>
<dbReference type="PANTHER" id="PTHR30363:SF4">
    <property type="entry name" value="GLYCEROL-3-PHOSPHATE REGULON REPRESSOR"/>
    <property type="match status" value="1"/>
</dbReference>
<dbReference type="PANTHER" id="PTHR30363">
    <property type="entry name" value="HTH-TYPE TRANSCRIPTIONAL REGULATOR SRLR-RELATED"/>
    <property type="match status" value="1"/>
</dbReference>
<dbReference type="Pfam" id="PF00455">
    <property type="entry name" value="DeoRC"/>
    <property type="match status" value="1"/>
</dbReference>
<dbReference type="Pfam" id="PF08220">
    <property type="entry name" value="HTH_DeoR"/>
    <property type="match status" value="1"/>
</dbReference>
<dbReference type="PRINTS" id="PR00037">
    <property type="entry name" value="HTHLACR"/>
</dbReference>
<dbReference type="SMART" id="SM01134">
    <property type="entry name" value="DeoRC"/>
    <property type="match status" value="1"/>
</dbReference>
<dbReference type="SMART" id="SM00420">
    <property type="entry name" value="HTH_DEOR"/>
    <property type="match status" value="1"/>
</dbReference>
<dbReference type="SUPFAM" id="SSF100950">
    <property type="entry name" value="NagB/RpiA/CoA transferase-like"/>
    <property type="match status" value="1"/>
</dbReference>
<dbReference type="SUPFAM" id="SSF46785">
    <property type="entry name" value="Winged helix' DNA-binding domain"/>
    <property type="match status" value="1"/>
</dbReference>
<dbReference type="PROSITE" id="PS00894">
    <property type="entry name" value="HTH_DEOR_1"/>
    <property type="match status" value="1"/>
</dbReference>
<dbReference type="PROSITE" id="PS51000">
    <property type="entry name" value="HTH_DEOR_2"/>
    <property type="match status" value="1"/>
</dbReference>